<protein>
    <recommendedName>
        <fullName>Superoxide dismutase [Cu-Zn]</fullName>
        <ecNumber>1.15.1.1</ecNumber>
    </recommendedName>
</protein>
<comment type="function">
    <text>Destroys radicals which are normally produced within the cells and which are toxic to biological systems.</text>
</comment>
<comment type="catalytic activity">
    <reaction>
        <text>2 superoxide + 2 H(+) = H2O2 + O2</text>
        <dbReference type="Rhea" id="RHEA:20696"/>
        <dbReference type="ChEBI" id="CHEBI:15378"/>
        <dbReference type="ChEBI" id="CHEBI:15379"/>
        <dbReference type="ChEBI" id="CHEBI:16240"/>
        <dbReference type="ChEBI" id="CHEBI:18421"/>
        <dbReference type="EC" id="1.15.1.1"/>
    </reaction>
</comment>
<comment type="cofactor">
    <cofactor evidence="1">
        <name>Cu cation</name>
        <dbReference type="ChEBI" id="CHEBI:23378"/>
    </cofactor>
    <text evidence="1">Binds 1 copper ion per subunit.</text>
</comment>
<comment type="cofactor">
    <cofactor evidence="1">
        <name>Zn(2+)</name>
        <dbReference type="ChEBI" id="CHEBI:29105"/>
    </cofactor>
    <text evidence="1">Binds 1 zinc ion per subunit.</text>
</comment>
<comment type="subcellular location">
    <subcellularLocation>
        <location>Cytoplasm</location>
    </subcellularLocation>
</comment>
<comment type="similarity">
    <text evidence="2">Belongs to the Cu-Zn superoxide dismutase family.</text>
</comment>
<gene>
    <name type="primary">SOD</name>
</gene>
<reference key="1">
    <citation type="journal article" date="1998" name="Parasitology">
        <title>Extracellular and cytoplasmic Cu/Zn superoxide dismutases from Haemonchus contortus.</title>
        <authorList>
            <person name="Liddell S."/>
            <person name="Knox D.P."/>
        </authorList>
    </citation>
    <scope>NUCLEOTIDE SEQUENCE [MRNA]</scope>
    <source>
        <strain>Moredun</strain>
    </source>
</reference>
<feature type="chain" id="PRO_0000164103" description="Superoxide dismutase [Cu-Zn]">
    <location>
        <begin position="1"/>
        <end position="159"/>
    </location>
</feature>
<feature type="binding site" evidence="1">
    <location>
        <position position="47"/>
    </location>
    <ligand>
        <name>Cu cation</name>
        <dbReference type="ChEBI" id="CHEBI:23378"/>
        <note>catalytic</note>
    </ligand>
</feature>
<feature type="binding site" evidence="1">
    <location>
        <position position="49"/>
    </location>
    <ligand>
        <name>Cu cation</name>
        <dbReference type="ChEBI" id="CHEBI:23378"/>
        <note>catalytic</note>
    </ligand>
</feature>
<feature type="binding site" evidence="1">
    <location>
        <position position="64"/>
    </location>
    <ligand>
        <name>Cu cation</name>
        <dbReference type="ChEBI" id="CHEBI:23378"/>
        <note>catalytic</note>
    </ligand>
</feature>
<feature type="binding site" evidence="1">
    <location>
        <position position="64"/>
    </location>
    <ligand>
        <name>Zn(2+)</name>
        <dbReference type="ChEBI" id="CHEBI:29105"/>
        <note>structural</note>
    </ligand>
</feature>
<feature type="binding site" evidence="1">
    <location>
        <position position="72"/>
    </location>
    <ligand>
        <name>Zn(2+)</name>
        <dbReference type="ChEBI" id="CHEBI:29105"/>
        <note>structural</note>
    </ligand>
</feature>
<feature type="binding site" evidence="1">
    <location>
        <position position="81"/>
    </location>
    <ligand>
        <name>Zn(2+)</name>
        <dbReference type="ChEBI" id="CHEBI:29105"/>
        <note>structural</note>
    </ligand>
</feature>
<feature type="binding site" evidence="1">
    <location>
        <position position="84"/>
    </location>
    <ligand>
        <name>Zn(2+)</name>
        <dbReference type="ChEBI" id="CHEBI:29105"/>
        <note>structural</note>
    </ligand>
</feature>
<feature type="binding site" evidence="1">
    <location>
        <position position="121"/>
    </location>
    <ligand>
        <name>Cu cation</name>
        <dbReference type="ChEBI" id="CHEBI:23378"/>
        <note>catalytic</note>
    </ligand>
</feature>
<feature type="disulfide bond" evidence="1">
    <location>
        <begin position="58"/>
        <end position="150"/>
    </location>
</feature>
<name>SODC_HAECO</name>
<sequence length="159" mass="16603">MSNRAVAVLRGDPGVTGTVWFSQDKESDPCVIKGEIKGLTPGLHGFHVHQYGDSTNGCTSAGPHFNPFNKTHGGPKDDVRHVGDLGNVEAGADGVAHFEIKDHLVKIHGEHTVVGRSLVVHAGTDDLGKGVGEKKEESLKTGNRGARVACGVIATAAPQ</sequence>
<keyword id="KW-0049">Antioxidant</keyword>
<keyword id="KW-0186">Copper</keyword>
<keyword id="KW-0963">Cytoplasm</keyword>
<keyword id="KW-1015">Disulfide bond</keyword>
<keyword id="KW-0479">Metal-binding</keyword>
<keyword id="KW-0560">Oxidoreductase</keyword>
<keyword id="KW-0862">Zinc</keyword>
<accession>Q27666</accession>
<evidence type="ECO:0000250" key="1"/>
<evidence type="ECO:0000305" key="2"/>
<dbReference type="EC" id="1.15.1.1"/>
<dbReference type="EMBL" id="Z69621">
    <property type="protein sequence ID" value="CAA93447.1"/>
    <property type="molecule type" value="mRNA"/>
</dbReference>
<dbReference type="SMR" id="Q27666"/>
<dbReference type="Proteomes" id="UP000025227">
    <property type="component" value="Unplaced"/>
</dbReference>
<dbReference type="GO" id="GO:0005737">
    <property type="term" value="C:cytoplasm"/>
    <property type="evidence" value="ECO:0007669"/>
    <property type="project" value="UniProtKB-SubCell"/>
</dbReference>
<dbReference type="GO" id="GO:0005507">
    <property type="term" value="F:copper ion binding"/>
    <property type="evidence" value="ECO:0007669"/>
    <property type="project" value="InterPro"/>
</dbReference>
<dbReference type="GO" id="GO:0004784">
    <property type="term" value="F:superoxide dismutase activity"/>
    <property type="evidence" value="ECO:0007669"/>
    <property type="project" value="UniProtKB-EC"/>
</dbReference>
<dbReference type="CDD" id="cd00305">
    <property type="entry name" value="Cu-Zn_Superoxide_Dismutase"/>
    <property type="match status" value="1"/>
</dbReference>
<dbReference type="FunFam" id="2.60.40.200:FF:000001">
    <property type="entry name" value="Superoxide dismutase [Cu-Zn]"/>
    <property type="match status" value="1"/>
</dbReference>
<dbReference type="Gene3D" id="2.60.40.200">
    <property type="entry name" value="Superoxide dismutase, copper/zinc binding domain"/>
    <property type="match status" value="1"/>
</dbReference>
<dbReference type="InterPro" id="IPR036423">
    <property type="entry name" value="SOD-like_Cu/Zn_dom_sf"/>
</dbReference>
<dbReference type="InterPro" id="IPR024134">
    <property type="entry name" value="SOD_Cu/Zn_/chaperone"/>
</dbReference>
<dbReference type="InterPro" id="IPR018152">
    <property type="entry name" value="SOD_Cu/Zn_BS"/>
</dbReference>
<dbReference type="InterPro" id="IPR001424">
    <property type="entry name" value="SOD_Cu_Zn_dom"/>
</dbReference>
<dbReference type="PANTHER" id="PTHR10003">
    <property type="entry name" value="SUPEROXIDE DISMUTASE CU-ZN -RELATED"/>
    <property type="match status" value="1"/>
</dbReference>
<dbReference type="Pfam" id="PF00080">
    <property type="entry name" value="Sod_Cu"/>
    <property type="match status" value="1"/>
</dbReference>
<dbReference type="PRINTS" id="PR00068">
    <property type="entry name" value="CUZNDISMTASE"/>
</dbReference>
<dbReference type="SUPFAM" id="SSF49329">
    <property type="entry name" value="Cu,Zn superoxide dismutase-like"/>
    <property type="match status" value="1"/>
</dbReference>
<dbReference type="PROSITE" id="PS00087">
    <property type="entry name" value="SOD_CU_ZN_1"/>
    <property type="match status" value="1"/>
</dbReference>
<organism>
    <name type="scientific">Haemonchus contortus</name>
    <name type="common">Barber pole worm</name>
    <dbReference type="NCBI Taxonomy" id="6289"/>
    <lineage>
        <taxon>Eukaryota</taxon>
        <taxon>Metazoa</taxon>
        <taxon>Ecdysozoa</taxon>
        <taxon>Nematoda</taxon>
        <taxon>Chromadorea</taxon>
        <taxon>Rhabditida</taxon>
        <taxon>Rhabditina</taxon>
        <taxon>Rhabditomorpha</taxon>
        <taxon>Strongyloidea</taxon>
        <taxon>Trichostrongylidae</taxon>
        <taxon>Haemonchus</taxon>
    </lineage>
</organism>
<proteinExistence type="evidence at transcript level"/>